<dbReference type="EC" id="3.6.4.13"/>
<dbReference type="EMBL" id="DS027690">
    <property type="protein sequence ID" value="EAW22005.1"/>
    <property type="molecule type" value="Genomic_DNA"/>
</dbReference>
<dbReference type="RefSeq" id="XP_001263902.1">
    <property type="nucleotide sequence ID" value="XM_001263901.1"/>
</dbReference>
<dbReference type="SMR" id="A1D8G1"/>
<dbReference type="STRING" id="331117.A1D8G1"/>
<dbReference type="EnsemblFungi" id="EAW22005">
    <property type="protein sequence ID" value="EAW22005"/>
    <property type="gene ID" value="NFIA_071760"/>
</dbReference>
<dbReference type="GeneID" id="4590548"/>
<dbReference type="KEGG" id="nfi:NFIA_071760"/>
<dbReference type="VEuPathDB" id="FungiDB:NFIA_071760"/>
<dbReference type="eggNOG" id="KOG0326">
    <property type="taxonomic scope" value="Eukaryota"/>
</dbReference>
<dbReference type="HOGENOM" id="CLU_003041_30_0_1"/>
<dbReference type="OMA" id="TYEDRHT"/>
<dbReference type="OrthoDB" id="10265785at2759"/>
<dbReference type="Proteomes" id="UP000006702">
    <property type="component" value="Unassembled WGS sequence"/>
</dbReference>
<dbReference type="GO" id="GO:0000932">
    <property type="term" value="C:P-body"/>
    <property type="evidence" value="ECO:0007669"/>
    <property type="project" value="UniProtKB-SubCell"/>
</dbReference>
<dbReference type="GO" id="GO:0005524">
    <property type="term" value="F:ATP binding"/>
    <property type="evidence" value="ECO:0007669"/>
    <property type="project" value="UniProtKB-KW"/>
</dbReference>
<dbReference type="GO" id="GO:0016887">
    <property type="term" value="F:ATP hydrolysis activity"/>
    <property type="evidence" value="ECO:0007669"/>
    <property type="project" value="RHEA"/>
</dbReference>
<dbReference type="GO" id="GO:0003723">
    <property type="term" value="F:RNA binding"/>
    <property type="evidence" value="ECO:0007669"/>
    <property type="project" value="UniProtKB-KW"/>
</dbReference>
<dbReference type="GO" id="GO:0003724">
    <property type="term" value="F:RNA helicase activity"/>
    <property type="evidence" value="ECO:0007669"/>
    <property type="project" value="UniProtKB-EC"/>
</dbReference>
<dbReference type="GO" id="GO:0006397">
    <property type="term" value="P:mRNA processing"/>
    <property type="evidence" value="ECO:0007669"/>
    <property type="project" value="UniProtKB-KW"/>
</dbReference>
<dbReference type="GO" id="GO:0051028">
    <property type="term" value="P:mRNA transport"/>
    <property type="evidence" value="ECO:0007669"/>
    <property type="project" value="UniProtKB-KW"/>
</dbReference>
<dbReference type="GO" id="GO:0006417">
    <property type="term" value="P:regulation of translation"/>
    <property type="evidence" value="ECO:0007669"/>
    <property type="project" value="UniProtKB-KW"/>
</dbReference>
<dbReference type="CDD" id="cd17940">
    <property type="entry name" value="DEADc_DDX6"/>
    <property type="match status" value="1"/>
</dbReference>
<dbReference type="CDD" id="cd18787">
    <property type="entry name" value="SF2_C_DEAD"/>
    <property type="match status" value="1"/>
</dbReference>
<dbReference type="FunFam" id="3.40.50.300:FF:000114">
    <property type="entry name" value="ATP-dependent RNA helicase DDX6"/>
    <property type="match status" value="1"/>
</dbReference>
<dbReference type="FunFam" id="3.40.50.300:FF:000364">
    <property type="entry name" value="ATP-dependent RNA helicase DDX6"/>
    <property type="match status" value="1"/>
</dbReference>
<dbReference type="Gene3D" id="3.40.50.300">
    <property type="entry name" value="P-loop containing nucleotide triphosphate hydrolases"/>
    <property type="match status" value="2"/>
</dbReference>
<dbReference type="InterPro" id="IPR011545">
    <property type="entry name" value="DEAD/DEAH_box_helicase_dom"/>
</dbReference>
<dbReference type="InterPro" id="IPR014001">
    <property type="entry name" value="Helicase_ATP-bd"/>
</dbReference>
<dbReference type="InterPro" id="IPR001650">
    <property type="entry name" value="Helicase_C-like"/>
</dbReference>
<dbReference type="InterPro" id="IPR027417">
    <property type="entry name" value="P-loop_NTPase"/>
</dbReference>
<dbReference type="InterPro" id="IPR000629">
    <property type="entry name" value="RNA-helicase_DEAD-box_CS"/>
</dbReference>
<dbReference type="InterPro" id="IPR014014">
    <property type="entry name" value="RNA_helicase_DEAD_Q_motif"/>
</dbReference>
<dbReference type="PANTHER" id="PTHR47960">
    <property type="entry name" value="DEAD-BOX ATP-DEPENDENT RNA HELICASE 50"/>
    <property type="match status" value="1"/>
</dbReference>
<dbReference type="Pfam" id="PF00270">
    <property type="entry name" value="DEAD"/>
    <property type="match status" value="1"/>
</dbReference>
<dbReference type="Pfam" id="PF00271">
    <property type="entry name" value="Helicase_C"/>
    <property type="match status" value="1"/>
</dbReference>
<dbReference type="SMART" id="SM00487">
    <property type="entry name" value="DEXDc"/>
    <property type="match status" value="1"/>
</dbReference>
<dbReference type="SMART" id="SM00490">
    <property type="entry name" value="HELICc"/>
    <property type="match status" value="1"/>
</dbReference>
<dbReference type="SUPFAM" id="SSF52540">
    <property type="entry name" value="P-loop containing nucleoside triphosphate hydrolases"/>
    <property type="match status" value="1"/>
</dbReference>
<dbReference type="PROSITE" id="PS00039">
    <property type="entry name" value="DEAD_ATP_HELICASE"/>
    <property type="match status" value="1"/>
</dbReference>
<dbReference type="PROSITE" id="PS51192">
    <property type="entry name" value="HELICASE_ATP_BIND_1"/>
    <property type="match status" value="1"/>
</dbReference>
<dbReference type="PROSITE" id="PS51194">
    <property type="entry name" value="HELICASE_CTER"/>
    <property type="match status" value="1"/>
</dbReference>
<dbReference type="PROSITE" id="PS51195">
    <property type="entry name" value="Q_MOTIF"/>
    <property type="match status" value="1"/>
</dbReference>
<comment type="function">
    <text evidence="1">ATP-dependent RNA helicase involved in mRNA turnover, and more specifically in mRNA decapping. Is involved in G1/S DNA-damage checkpoint recovery, probably through the regulation of the translational status of a subset of mRNAs. May also have a role in translation and mRNA nuclear export (By similarity).</text>
</comment>
<comment type="catalytic activity">
    <reaction>
        <text>ATP + H2O = ADP + phosphate + H(+)</text>
        <dbReference type="Rhea" id="RHEA:13065"/>
        <dbReference type="ChEBI" id="CHEBI:15377"/>
        <dbReference type="ChEBI" id="CHEBI:15378"/>
        <dbReference type="ChEBI" id="CHEBI:30616"/>
        <dbReference type="ChEBI" id="CHEBI:43474"/>
        <dbReference type="ChEBI" id="CHEBI:456216"/>
        <dbReference type="EC" id="3.6.4.13"/>
    </reaction>
</comment>
<comment type="subcellular location">
    <subcellularLocation>
        <location evidence="1">Cytoplasm</location>
        <location evidence="1">P-body</location>
    </subcellularLocation>
    <text evidence="1">Is concentrated in several cytoplasmic foci called P bodies (or cytoplasmic processing bodies) which represent sites of mRNA decapping and 5' to 3' exonucleotidic decay.</text>
</comment>
<comment type="domain">
    <text>The Q motif is unique to and characteristic of the DEAD box family of RNA helicases and controls ATP binding and hydrolysis.</text>
</comment>
<comment type="similarity">
    <text evidence="5">Belongs to the DEAD box helicase family. DDX6/DHH1 subfamily.</text>
</comment>
<keyword id="KW-0067">ATP-binding</keyword>
<keyword id="KW-0963">Cytoplasm</keyword>
<keyword id="KW-0347">Helicase</keyword>
<keyword id="KW-0378">Hydrolase</keyword>
<keyword id="KW-0507">mRNA processing</keyword>
<keyword id="KW-0509">mRNA transport</keyword>
<keyword id="KW-0547">Nucleotide-binding</keyword>
<keyword id="KW-1185">Reference proteome</keyword>
<keyword id="KW-0694">RNA-binding</keyword>
<keyword id="KW-0810">Translation regulation</keyword>
<keyword id="KW-0813">Transport</keyword>
<reference key="1">
    <citation type="journal article" date="2008" name="PLoS Genet.">
        <title>Genomic islands in the pathogenic filamentous fungus Aspergillus fumigatus.</title>
        <authorList>
            <person name="Fedorova N.D."/>
            <person name="Khaldi N."/>
            <person name="Joardar V.S."/>
            <person name="Maiti R."/>
            <person name="Amedeo P."/>
            <person name="Anderson M.J."/>
            <person name="Crabtree J."/>
            <person name="Silva J.C."/>
            <person name="Badger J.H."/>
            <person name="Albarraq A."/>
            <person name="Angiuoli S."/>
            <person name="Bussey H."/>
            <person name="Bowyer P."/>
            <person name="Cotty P.J."/>
            <person name="Dyer P.S."/>
            <person name="Egan A."/>
            <person name="Galens K."/>
            <person name="Fraser-Liggett C.M."/>
            <person name="Haas B.J."/>
            <person name="Inman J.M."/>
            <person name="Kent R."/>
            <person name="Lemieux S."/>
            <person name="Malavazi I."/>
            <person name="Orvis J."/>
            <person name="Roemer T."/>
            <person name="Ronning C.M."/>
            <person name="Sundaram J.P."/>
            <person name="Sutton G."/>
            <person name="Turner G."/>
            <person name="Venter J.C."/>
            <person name="White O.R."/>
            <person name="Whitty B.R."/>
            <person name="Youngman P."/>
            <person name="Wolfe K.H."/>
            <person name="Goldman G.H."/>
            <person name="Wortman J.R."/>
            <person name="Jiang B."/>
            <person name="Denning D.W."/>
            <person name="Nierman W.C."/>
        </authorList>
    </citation>
    <scope>NUCLEOTIDE SEQUENCE [LARGE SCALE GENOMIC DNA]</scope>
    <source>
        <strain>ATCC 1020 / DSM 3700 / CBS 544.65 / FGSC A1164 / JCM 1740 / NRRL 181 / WB 181</strain>
    </source>
</reference>
<gene>
    <name type="primary">dhh1</name>
    <name type="ORF">NFIA_071760</name>
</gene>
<sequence length="507" mass="57178">MADALANQLNNTSLGEANSEMRWREQLNMPAKDARPQTEDVTATKGLEFEDFYIKRELMMGIFEAGFEKPSPIQEETIPVALTGRDILARAKNGTGKTAAFVIPTLERINPKSTKTQALILVPTRELALQTSQVCKTLGKHLGINVMVTTGGTGLMDDIIRLNDAVHILVGTPGRVLDLASKGVADLSECPTFVMDEADKLLSPEFTPVIEQLLSFHPKDRQVMLFSATFPLIVKSFKDKHMRNPYEINLMDELTLRGITQYYAFVEEKQKVHCLNTLFSKLQINQSIIFCNSTNRVELLAKKITELGYSCFYSHARMLQQHRNRVFHDFRNGVCRNLVCSDLLTRGIDIQAVNVVINFDFPKNAETYLHRIGRSGRFGHLGLAINLINWDDRFNLYKIEQELGTEIQPIPQNIDKKLYVYDSPETIPRPISNPSQPRQITNTPANTSTADRRHHNHPNNGQYQFNRGRGSYRGRGQGQRRSAQTETNKFGHPQGQHSGKTSTAPVS</sequence>
<name>DHH1_NEOFI</name>
<feature type="chain" id="PRO_0000282464" description="ATP-dependent RNA helicase dhh1">
    <location>
        <begin position="1"/>
        <end position="507"/>
    </location>
</feature>
<feature type="domain" description="Helicase ATP-binding" evidence="2">
    <location>
        <begin position="78"/>
        <end position="248"/>
    </location>
</feature>
<feature type="domain" description="Helicase C-terminal" evidence="3">
    <location>
        <begin position="258"/>
        <end position="418"/>
    </location>
</feature>
<feature type="region of interest" description="Disordered" evidence="4">
    <location>
        <begin position="1"/>
        <end position="20"/>
    </location>
</feature>
<feature type="region of interest" description="Disordered" evidence="4">
    <location>
        <begin position="425"/>
        <end position="507"/>
    </location>
</feature>
<feature type="short sequence motif" description="Q motif">
    <location>
        <begin position="47"/>
        <end position="75"/>
    </location>
</feature>
<feature type="short sequence motif" description="DEAD box">
    <location>
        <begin position="196"/>
        <end position="199"/>
    </location>
</feature>
<feature type="compositionally biased region" description="Polar residues" evidence="4">
    <location>
        <begin position="7"/>
        <end position="16"/>
    </location>
</feature>
<feature type="compositionally biased region" description="Polar residues" evidence="4">
    <location>
        <begin position="432"/>
        <end position="449"/>
    </location>
</feature>
<feature type="compositionally biased region" description="Polar residues" evidence="4">
    <location>
        <begin position="495"/>
        <end position="507"/>
    </location>
</feature>
<feature type="binding site" evidence="2">
    <location>
        <begin position="91"/>
        <end position="98"/>
    </location>
    <ligand>
        <name>ATP</name>
        <dbReference type="ChEBI" id="CHEBI:30616"/>
    </ligand>
</feature>
<organism>
    <name type="scientific">Neosartorya fischeri (strain ATCC 1020 / DSM 3700 / CBS 544.65 / FGSC A1164 / JCM 1740 / NRRL 181 / WB 181)</name>
    <name type="common">Aspergillus fischerianus</name>
    <dbReference type="NCBI Taxonomy" id="331117"/>
    <lineage>
        <taxon>Eukaryota</taxon>
        <taxon>Fungi</taxon>
        <taxon>Dikarya</taxon>
        <taxon>Ascomycota</taxon>
        <taxon>Pezizomycotina</taxon>
        <taxon>Eurotiomycetes</taxon>
        <taxon>Eurotiomycetidae</taxon>
        <taxon>Eurotiales</taxon>
        <taxon>Aspergillaceae</taxon>
        <taxon>Aspergillus</taxon>
        <taxon>Aspergillus subgen. Fumigati</taxon>
    </lineage>
</organism>
<accession>A1D8G1</accession>
<protein>
    <recommendedName>
        <fullName>ATP-dependent RNA helicase dhh1</fullName>
        <ecNumber>3.6.4.13</ecNumber>
    </recommendedName>
</protein>
<evidence type="ECO:0000250" key="1"/>
<evidence type="ECO:0000255" key="2">
    <source>
        <dbReference type="PROSITE-ProRule" id="PRU00541"/>
    </source>
</evidence>
<evidence type="ECO:0000255" key="3">
    <source>
        <dbReference type="PROSITE-ProRule" id="PRU00542"/>
    </source>
</evidence>
<evidence type="ECO:0000256" key="4">
    <source>
        <dbReference type="SAM" id="MobiDB-lite"/>
    </source>
</evidence>
<evidence type="ECO:0000305" key="5"/>
<proteinExistence type="inferred from homology"/>